<comment type="similarity">
    <text evidence="1">Belongs to the nitrobindin family.</text>
</comment>
<comment type="caution">
    <text evidence="2">Lacks the conserved His residue that binds heme iron in the nitrobindin family.</text>
</comment>
<protein>
    <recommendedName>
        <fullName evidence="2">Ferric nitrobindin-like protein</fullName>
    </recommendedName>
</protein>
<accession>Q82G68</accession>
<organism>
    <name type="scientific">Streptomyces avermitilis (strain ATCC 31267 / DSM 46492 / JCM 5070 / NBRC 14893 / NCIMB 12804 / NRRL 8165 / MA-4680)</name>
    <dbReference type="NCBI Taxonomy" id="227882"/>
    <lineage>
        <taxon>Bacteria</taxon>
        <taxon>Bacillati</taxon>
        <taxon>Actinomycetota</taxon>
        <taxon>Actinomycetes</taxon>
        <taxon>Kitasatosporales</taxon>
        <taxon>Streptomycetaceae</taxon>
        <taxon>Streptomyces</taxon>
    </lineage>
</organism>
<dbReference type="EMBL" id="BA000030">
    <property type="protein sequence ID" value="BAC71742.1"/>
    <property type="molecule type" value="Genomic_DNA"/>
</dbReference>
<dbReference type="RefSeq" id="WP_010985459.1">
    <property type="nucleotide sequence ID" value="NZ_JZJK01000060.1"/>
</dbReference>
<dbReference type="SMR" id="Q82G68"/>
<dbReference type="GeneID" id="41541094"/>
<dbReference type="KEGG" id="sma:SAVERM_4030"/>
<dbReference type="eggNOG" id="COG3485">
    <property type="taxonomic scope" value="Bacteria"/>
</dbReference>
<dbReference type="HOGENOM" id="CLU_085483_0_0_11"/>
<dbReference type="OrthoDB" id="4804006at2"/>
<dbReference type="Proteomes" id="UP000000428">
    <property type="component" value="Chromosome"/>
</dbReference>
<dbReference type="CDD" id="cd07828">
    <property type="entry name" value="lipocalin_heme-bd-THAP4-like"/>
    <property type="match status" value="1"/>
</dbReference>
<dbReference type="Gene3D" id="2.40.128.20">
    <property type="match status" value="1"/>
</dbReference>
<dbReference type="HAMAP" id="MF_01297">
    <property type="entry name" value="nitrobindin"/>
    <property type="match status" value="1"/>
</dbReference>
<dbReference type="InterPro" id="IPR012674">
    <property type="entry name" value="Calycin"/>
</dbReference>
<dbReference type="InterPro" id="IPR022939">
    <property type="entry name" value="Nb(III)_bact/plant"/>
</dbReference>
<dbReference type="InterPro" id="IPR045165">
    <property type="entry name" value="Nitrobindin"/>
</dbReference>
<dbReference type="InterPro" id="IPR014878">
    <property type="entry name" value="THAP4-like_heme-bd"/>
</dbReference>
<dbReference type="PANTHER" id="PTHR15854:SF4">
    <property type="entry name" value="PEROXYNITRITE ISOMERASE THAP4"/>
    <property type="match status" value="1"/>
</dbReference>
<dbReference type="PANTHER" id="PTHR15854">
    <property type="entry name" value="THAP4 PROTEIN"/>
    <property type="match status" value="1"/>
</dbReference>
<dbReference type="Pfam" id="PF08768">
    <property type="entry name" value="THAP4_heme-bd"/>
    <property type="match status" value="1"/>
</dbReference>
<dbReference type="SUPFAM" id="SSF50814">
    <property type="entry name" value="Lipocalins"/>
    <property type="match status" value="1"/>
</dbReference>
<name>NBLIK_STRAW</name>
<evidence type="ECO:0000255" key="1">
    <source>
        <dbReference type="HAMAP-Rule" id="MF_01297"/>
    </source>
</evidence>
<evidence type="ECO:0000305" key="2"/>
<sequence>MIEIPSDLHKDLVPLAFLLGNWAGAGVHDFPGSEKCNFGQEVSFTHDGRDFLEYHSHTWVLDADGNKVRPLETESGFWRVDAARKVEAVMTRDDGVVEIWYGELAAKKPQIDLVTDAVARTAAAGPYSGGKRLYGYVKSDLMWVGEKQTPEVELRPYMSAHLKKVVTPEDVERWAKALPDDMPDDGIAFFK</sequence>
<gene>
    <name type="ordered locus">SAV_4030</name>
</gene>
<keyword id="KW-1185">Reference proteome</keyword>
<reference key="1">
    <citation type="journal article" date="2003" name="Nat. Biotechnol.">
        <title>Complete genome sequence and comparative analysis of the industrial microorganism Streptomyces avermitilis.</title>
        <authorList>
            <person name="Ikeda H."/>
            <person name="Ishikawa J."/>
            <person name="Hanamoto A."/>
            <person name="Shinose M."/>
            <person name="Kikuchi H."/>
            <person name="Shiba T."/>
            <person name="Sakaki Y."/>
            <person name="Hattori M."/>
            <person name="Omura S."/>
        </authorList>
    </citation>
    <scope>NUCLEOTIDE SEQUENCE [LARGE SCALE GENOMIC DNA]</scope>
    <source>
        <strain>ATCC 31267 / DSM 46492 / JCM 5070 / NBRC 14893 / NCIMB 12804 / NRRL 8165 / MA-4680</strain>
    </source>
</reference>
<reference key="2">
    <citation type="journal article" date="2001" name="Proc. Natl. Acad. Sci. U.S.A.">
        <title>Genome sequence of an industrial microorganism Streptomyces avermitilis: deducing the ability of producing secondary metabolites.</title>
        <authorList>
            <person name="Omura S."/>
            <person name="Ikeda H."/>
            <person name="Ishikawa J."/>
            <person name="Hanamoto A."/>
            <person name="Takahashi C."/>
            <person name="Shinose M."/>
            <person name="Takahashi Y."/>
            <person name="Horikawa H."/>
            <person name="Nakazawa H."/>
            <person name="Osonoe T."/>
            <person name="Kikuchi H."/>
            <person name="Shiba T."/>
            <person name="Sakaki Y."/>
            <person name="Hattori M."/>
        </authorList>
    </citation>
    <scope>NUCLEOTIDE SEQUENCE [LARGE SCALE GENOMIC DNA]</scope>
    <source>
        <strain>ATCC 31267 / DSM 46492 / JCM 5070 / NBRC 14893 / NCIMB 12804 / NRRL 8165 / MA-4680</strain>
    </source>
</reference>
<feature type="chain" id="PRO_0000356951" description="Ferric nitrobindin-like protein">
    <location>
        <begin position="1"/>
        <end position="191"/>
    </location>
</feature>
<feature type="short sequence motif" description="GXWXGXG" evidence="1">
    <location>
        <begin position="20"/>
        <end position="26"/>
    </location>
</feature>
<proteinExistence type="inferred from homology"/>